<protein>
    <recommendedName>
        <fullName evidence="1">Regulatory protein RecX</fullName>
    </recommendedName>
</protein>
<sequence>MSDAEDIPTGRKRRPREQTPVQRALGLLVRREHSRKELTRKLTARGIEDEAAQAAVAKLTEAGWQDDTRFAENLVRMRANTGYGPIHVRAELGTHGLDSAAIAAAMDSYEGDWQENARDLVRRRFGEAGPQDLTQRRKAADLLARRGFDGDSIRRATRYDPDD</sequence>
<dbReference type="EMBL" id="AM743169">
    <property type="protein sequence ID" value="CAQ45265.1"/>
    <property type="molecule type" value="Genomic_DNA"/>
</dbReference>
<dbReference type="RefSeq" id="WP_005409024.1">
    <property type="nucleotide sequence ID" value="NC_010943.1"/>
</dbReference>
<dbReference type="SMR" id="B2FL32"/>
<dbReference type="EnsemblBacteria" id="CAQ45265">
    <property type="protein sequence ID" value="CAQ45265"/>
    <property type="gene ID" value="Smlt1742"/>
</dbReference>
<dbReference type="GeneID" id="93832907"/>
<dbReference type="KEGG" id="sml:Smlt1742"/>
<dbReference type="eggNOG" id="COG2137">
    <property type="taxonomic scope" value="Bacteria"/>
</dbReference>
<dbReference type="HOGENOM" id="CLU_066607_3_2_6"/>
<dbReference type="Proteomes" id="UP000008840">
    <property type="component" value="Chromosome"/>
</dbReference>
<dbReference type="GO" id="GO:0005737">
    <property type="term" value="C:cytoplasm"/>
    <property type="evidence" value="ECO:0007669"/>
    <property type="project" value="UniProtKB-SubCell"/>
</dbReference>
<dbReference type="GO" id="GO:0006282">
    <property type="term" value="P:regulation of DNA repair"/>
    <property type="evidence" value="ECO:0007669"/>
    <property type="project" value="UniProtKB-UniRule"/>
</dbReference>
<dbReference type="Gene3D" id="1.10.10.10">
    <property type="entry name" value="Winged helix-like DNA-binding domain superfamily/Winged helix DNA-binding domain"/>
    <property type="match status" value="3"/>
</dbReference>
<dbReference type="HAMAP" id="MF_01114">
    <property type="entry name" value="RecX"/>
    <property type="match status" value="1"/>
</dbReference>
<dbReference type="InterPro" id="IPR053926">
    <property type="entry name" value="RecX_HTH_1st"/>
</dbReference>
<dbReference type="InterPro" id="IPR053924">
    <property type="entry name" value="RecX_HTH_2nd"/>
</dbReference>
<dbReference type="InterPro" id="IPR053925">
    <property type="entry name" value="RecX_HTH_3rd"/>
</dbReference>
<dbReference type="InterPro" id="IPR003783">
    <property type="entry name" value="Regulatory_RecX"/>
</dbReference>
<dbReference type="InterPro" id="IPR036388">
    <property type="entry name" value="WH-like_DNA-bd_sf"/>
</dbReference>
<dbReference type="NCBIfam" id="NF001054">
    <property type="entry name" value="PRK00117.2-1"/>
    <property type="match status" value="1"/>
</dbReference>
<dbReference type="PANTHER" id="PTHR33602">
    <property type="entry name" value="REGULATORY PROTEIN RECX FAMILY PROTEIN"/>
    <property type="match status" value="1"/>
</dbReference>
<dbReference type="PANTHER" id="PTHR33602:SF1">
    <property type="entry name" value="REGULATORY PROTEIN RECX FAMILY PROTEIN"/>
    <property type="match status" value="1"/>
</dbReference>
<dbReference type="Pfam" id="PF21982">
    <property type="entry name" value="RecX_HTH1"/>
    <property type="match status" value="1"/>
</dbReference>
<dbReference type="Pfam" id="PF02631">
    <property type="entry name" value="RecX_HTH2"/>
    <property type="match status" value="1"/>
</dbReference>
<dbReference type="Pfam" id="PF21981">
    <property type="entry name" value="RecX_HTH3"/>
    <property type="match status" value="1"/>
</dbReference>
<name>RECX_STRMK</name>
<proteinExistence type="inferred from homology"/>
<evidence type="ECO:0000255" key="1">
    <source>
        <dbReference type="HAMAP-Rule" id="MF_01114"/>
    </source>
</evidence>
<evidence type="ECO:0000256" key="2">
    <source>
        <dbReference type="SAM" id="MobiDB-lite"/>
    </source>
</evidence>
<feature type="chain" id="PRO_1000137197" description="Regulatory protein RecX">
    <location>
        <begin position="1"/>
        <end position="163"/>
    </location>
</feature>
<feature type="region of interest" description="Disordered" evidence="2">
    <location>
        <begin position="1"/>
        <end position="21"/>
    </location>
</feature>
<accession>B2FL32</accession>
<gene>
    <name evidence="1" type="primary">recX</name>
    <name type="ordered locus">Smlt1742</name>
</gene>
<reference key="1">
    <citation type="journal article" date="2008" name="Genome Biol.">
        <title>The complete genome, comparative and functional analysis of Stenotrophomonas maltophilia reveals an organism heavily shielded by drug resistance determinants.</title>
        <authorList>
            <person name="Crossman L.C."/>
            <person name="Gould V.C."/>
            <person name="Dow J.M."/>
            <person name="Vernikos G.S."/>
            <person name="Okazaki A."/>
            <person name="Sebaihia M."/>
            <person name="Saunders D."/>
            <person name="Arrowsmith C."/>
            <person name="Carver T."/>
            <person name="Peters N."/>
            <person name="Adlem E."/>
            <person name="Kerhornou A."/>
            <person name="Lord A."/>
            <person name="Murphy L."/>
            <person name="Seeger K."/>
            <person name="Squares R."/>
            <person name="Rutter S."/>
            <person name="Quail M.A."/>
            <person name="Rajandream M.A."/>
            <person name="Harris D."/>
            <person name="Churcher C."/>
            <person name="Bentley S.D."/>
            <person name="Parkhill J."/>
            <person name="Thomson N.R."/>
            <person name="Avison M.B."/>
        </authorList>
    </citation>
    <scope>NUCLEOTIDE SEQUENCE [LARGE SCALE GENOMIC DNA]</scope>
    <source>
        <strain>K279a</strain>
    </source>
</reference>
<keyword id="KW-0963">Cytoplasm</keyword>
<keyword id="KW-1185">Reference proteome</keyword>
<comment type="function">
    <text evidence="1">Modulates RecA activity.</text>
</comment>
<comment type="subcellular location">
    <subcellularLocation>
        <location evidence="1">Cytoplasm</location>
    </subcellularLocation>
</comment>
<comment type="similarity">
    <text evidence="1">Belongs to the RecX family.</text>
</comment>
<organism>
    <name type="scientific">Stenotrophomonas maltophilia (strain K279a)</name>
    <dbReference type="NCBI Taxonomy" id="522373"/>
    <lineage>
        <taxon>Bacteria</taxon>
        <taxon>Pseudomonadati</taxon>
        <taxon>Pseudomonadota</taxon>
        <taxon>Gammaproteobacteria</taxon>
        <taxon>Lysobacterales</taxon>
        <taxon>Lysobacteraceae</taxon>
        <taxon>Stenotrophomonas</taxon>
        <taxon>Stenotrophomonas maltophilia group</taxon>
    </lineage>
</organism>